<keyword id="KW-0217">Developmental protein</keyword>
<keyword id="KW-0238">DNA-binding</keyword>
<keyword id="KW-0371">Homeobox</keyword>
<keyword id="KW-0539">Nucleus</keyword>
<keyword id="KW-1185">Reference proteome</keyword>
<keyword id="KW-0804">Transcription</keyword>
<keyword id="KW-0805">Transcription regulation</keyword>
<accession>Q1KKX9</accession>
<sequence>MSSYFVNSFSGRYPNGPDYQLLNYGASSGALNGGTYRDSSTATMHHATGSYGYTYNGMDLTVNNRRGGSGDDAVTSGHFGGGSLVGDALGFGSPTTERSFRQPSSCSLASAAESLLSPGSGDTSLGARSSSPRSEQSGSGNLSSTNLSSSTNISSSGGGGGGGTVQRFTELDDASTESEELRRDNGHGGNPVPRTGHSHGVQKQEGGPAGAAAGNTVGSEGQPPQIFPWMRKLHISHDMTGPDGKRARTAYTRYQTLELEKEFHFNRYLTRRRRIEIAHALCLTERQIKIWFQNRRMKWKKDNKLKSMSLATPGSAFQP</sequence>
<feature type="chain" id="PRO_0000265979" description="Homeobox protein Hox-B5a">
    <location>
        <begin position="1"/>
        <end position="319"/>
    </location>
</feature>
<feature type="DNA-binding region" description="Homeobox" evidence="2">
    <location>
        <begin position="244"/>
        <end position="303"/>
    </location>
</feature>
<feature type="region of interest" description="Disordered" evidence="3">
    <location>
        <begin position="114"/>
        <end position="224"/>
    </location>
</feature>
<feature type="short sequence motif" description="Antp-type hexapeptide">
    <location>
        <begin position="226"/>
        <end position="231"/>
    </location>
</feature>
<feature type="compositionally biased region" description="Low complexity" evidence="3">
    <location>
        <begin position="128"/>
        <end position="155"/>
    </location>
</feature>
<name>HXB5A_TAKRU</name>
<dbReference type="EMBL" id="DQ481665">
    <property type="protein sequence ID" value="ABF22415.1"/>
    <property type="molecule type" value="Genomic_DNA"/>
</dbReference>
<dbReference type="RefSeq" id="XP_003964307.1">
    <property type="nucleotide sequence ID" value="XM_003964258.2"/>
</dbReference>
<dbReference type="SMR" id="Q1KKX9"/>
<dbReference type="STRING" id="31033.ENSTRUP00000024386"/>
<dbReference type="GeneID" id="101072989"/>
<dbReference type="KEGG" id="tru:101072989"/>
<dbReference type="HOGENOM" id="CLU_061398_2_1_1"/>
<dbReference type="InParanoid" id="Q1KKX9"/>
<dbReference type="OrthoDB" id="6159439at2759"/>
<dbReference type="Proteomes" id="UP000005226">
    <property type="component" value="Unplaced"/>
</dbReference>
<dbReference type="GO" id="GO:0005634">
    <property type="term" value="C:nucleus"/>
    <property type="evidence" value="ECO:0007669"/>
    <property type="project" value="UniProtKB-SubCell"/>
</dbReference>
<dbReference type="GO" id="GO:0000981">
    <property type="term" value="F:DNA-binding transcription factor activity, RNA polymerase II-specific"/>
    <property type="evidence" value="ECO:0007669"/>
    <property type="project" value="InterPro"/>
</dbReference>
<dbReference type="GO" id="GO:0000978">
    <property type="term" value="F:RNA polymerase II cis-regulatory region sequence-specific DNA binding"/>
    <property type="evidence" value="ECO:0007669"/>
    <property type="project" value="TreeGrafter"/>
</dbReference>
<dbReference type="GO" id="GO:0009952">
    <property type="term" value="P:anterior/posterior pattern specification"/>
    <property type="evidence" value="ECO:0007669"/>
    <property type="project" value="TreeGrafter"/>
</dbReference>
<dbReference type="CDD" id="cd00086">
    <property type="entry name" value="homeodomain"/>
    <property type="match status" value="1"/>
</dbReference>
<dbReference type="FunFam" id="1.10.10.60:FF:000055">
    <property type="entry name" value="Homeobox protein Hox-A5"/>
    <property type="match status" value="1"/>
</dbReference>
<dbReference type="Gene3D" id="1.10.10.60">
    <property type="entry name" value="Homeodomain-like"/>
    <property type="match status" value="1"/>
</dbReference>
<dbReference type="InterPro" id="IPR050296">
    <property type="entry name" value="Antp_homeobox"/>
</dbReference>
<dbReference type="InterPro" id="IPR001356">
    <property type="entry name" value="HD"/>
</dbReference>
<dbReference type="InterPro" id="IPR020479">
    <property type="entry name" value="HD_metazoa"/>
</dbReference>
<dbReference type="InterPro" id="IPR017995">
    <property type="entry name" value="Homeobox_antennapedia"/>
</dbReference>
<dbReference type="InterPro" id="IPR001827">
    <property type="entry name" value="Homeobox_Antennapedia_CS"/>
</dbReference>
<dbReference type="InterPro" id="IPR017970">
    <property type="entry name" value="Homeobox_CS"/>
</dbReference>
<dbReference type="InterPro" id="IPR009057">
    <property type="entry name" value="Homeodomain-like_sf"/>
</dbReference>
<dbReference type="PANTHER" id="PTHR45659">
    <property type="entry name" value="HOMEOBOX PROTEIN HOX"/>
    <property type="match status" value="1"/>
</dbReference>
<dbReference type="PANTHER" id="PTHR45659:SF2">
    <property type="entry name" value="HOMEOBOX PROTEIN HOX-B5"/>
    <property type="match status" value="1"/>
</dbReference>
<dbReference type="Pfam" id="PF00046">
    <property type="entry name" value="Homeodomain"/>
    <property type="match status" value="1"/>
</dbReference>
<dbReference type="PRINTS" id="PR00025">
    <property type="entry name" value="ANTENNAPEDIA"/>
</dbReference>
<dbReference type="PRINTS" id="PR00024">
    <property type="entry name" value="HOMEOBOX"/>
</dbReference>
<dbReference type="SMART" id="SM00389">
    <property type="entry name" value="HOX"/>
    <property type="match status" value="1"/>
</dbReference>
<dbReference type="SUPFAM" id="SSF46689">
    <property type="entry name" value="Homeodomain-like"/>
    <property type="match status" value="1"/>
</dbReference>
<dbReference type="PROSITE" id="PS00032">
    <property type="entry name" value="ANTENNAPEDIA"/>
    <property type="match status" value="1"/>
</dbReference>
<dbReference type="PROSITE" id="PS00027">
    <property type="entry name" value="HOMEOBOX_1"/>
    <property type="match status" value="1"/>
</dbReference>
<dbReference type="PROSITE" id="PS50071">
    <property type="entry name" value="HOMEOBOX_2"/>
    <property type="match status" value="1"/>
</dbReference>
<proteinExistence type="inferred from homology"/>
<evidence type="ECO:0000250" key="1"/>
<evidence type="ECO:0000255" key="2">
    <source>
        <dbReference type="PROSITE-ProRule" id="PRU00108"/>
    </source>
</evidence>
<evidence type="ECO:0000256" key="3">
    <source>
        <dbReference type="SAM" id="MobiDB-lite"/>
    </source>
</evidence>
<evidence type="ECO:0000305" key="4"/>
<comment type="function">
    <text evidence="1">Sequence-specific transcription factor which is part of a developmental regulatory system that provides cells with specific positional identities on the anterior-posterior axis.</text>
</comment>
<comment type="subcellular location">
    <subcellularLocation>
        <location evidence="2">Nucleus</location>
    </subcellularLocation>
</comment>
<comment type="similarity">
    <text evidence="4">Belongs to the Antp homeobox family.</text>
</comment>
<reference key="1">
    <citation type="journal article" date="2006" name="Proc. Natl. Acad. Sci. U.S.A.">
        <title>Highly conserved syntenic blocks at the vertebrate Hox loci and conserved regulatory elements within and outside Hox gene clusters.</title>
        <authorList>
            <person name="Lee A.P."/>
            <person name="Koh E.G.L."/>
            <person name="Tay A."/>
            <person name="Brenner S."/>
            <person name="Venkatesh B."/>
        </authorList>
    </citation>
    <scope>NUCLEOTIDE SEQUENCE [GENOMIC DNA]</scope>
</reference>
<gene>
    <name type="primary">hoxb5a</name>
</gene>
<protein>
    <recommendedName>
        <fullName>Homeobox protein Hox-B5a</fullName>
    </recommendedName>
</protein>
<organism>
    <name type="scientific">Takifugu rubripes</name>
    <name type="common">Japanese pufferfish</name>
    <name type="synonym">Fugu rubripes</name>
    <dbReference type="NCBI Taxonomy" id="31033"/>
    <lineage>
        <taxon>Eukaryota</taxon>
        <taxon>Metazoa</taxon>
        <taxon>Chordata</taxon>
        <taxon>Craniata</taxon>
        <taxon>Vertebrata</taxon>
        <taxon>Euteleostomi</taxon>
        <taxon>Actinopterygii</taxon>
        <taxon>Neopterygii</taxon>
        <taxon>Teleostei</taxon>
        <taxon>Neoteleostei</taxon>
        <taxon>Acanthomorphata</taxon>
        <taxon>Eupercaria</taxon>
        <taxon>Tetraodontiformes</taxon>
        <taxon>Tetradontoidea</taxon>
        <taxon>Tetraodontidae</taxon>
        <taxon>Takifugu</taxon>
    </lineage>
</organism>